<accession>Q5F5R3</accession>
<dbReference type="EMBL" id="AE004969">
    <property type="protein sequence ID" value="AAW90474.1"/>
    <property type="molecule type" value="Genomic_DNA"/>
</dbReference>
<dbReference type="RefSeq" id="WP_003694346.1">
    <property type="nucleotide sequence ID" value="NC_002946.2"/>
</dbReference>
<dbReference type="RefSeq" id="YP_208886.1">
    <property type="nucleotide sequence ID" value="NC_002946.2"/>
</dbReference>
<dbReference type="SMR" id="Q5F5R3"/>
<dbReference type="STRING" id="242231.NGO_1853"/>
<dbReference type="KEGG" id="ngo:NGO_1853"/>
<dbReference type="PATRIC" id="fig|242231.10.peg.2228"/>
<dbReference type="HOGENOM" id="CLU_092227_0_1_4"/>
<dbReference type="Proteomes" id="UP000000535">
    <property type="component" value="Chromosome"/>
</dbReference>
<dbReference type="GO" id="GO:0015934">
    <property type="term" value="C:large ribosomal subunit"/>
    <property type="evidence" value="ECO:0007669"/>
    <property type="project" value="InterPro"/>
</dbReference>
<dbReference type="GO" id="GO:0070180">
    <property type="term" value="F:large ribosomal subunit rRNA binding"/>
    <property type="evidence" value="ECO:0007669"/>
    <property type="project" value="UniProtKB-UniRule"/>
</dbReference>
<dbReference type="GO" id="GO:0003735">
    <property type="term" value="F:structural constituent of ribosome"/>
    <property type="evidence" value="ECO:0007669"/>
    <property type="project" value="InterPro"/>
</dbReference>
<dbReference type="GO" id="GO:0006412">
    <property type="term" value="P:translation"/>
    <property type="evidence" value="ECO:0007669"/>
    <property type="project" value="UniProtKB-UniRule"/>
</dbReference>
<dbReference type="CDD" id="cd05797">
    <property type="entry name" value="Ribosomal_L10"/>
    <property type="match status" value="1"/>
</dbReference>
<dbReference type="FunFam" id="3.30.70.1730:FF:000008">
    <property type="entry name" value="50S ribosomal protein L10"/>
    <property type="match status" value="1"/>
</dbReference>
<dbReference type="Gene3D" id="3.30.70.1730">
    <property type="match status" value="1"/>
</dbReference>
<dbReference type="Gene3D" id="6.10.250.290">
    <property type="match status" value="1"/>
</dbReference>
<dbReference type="HAMAP" id="MF_00362">
    <property type="entry name" value="Ribosomal_uL10"/>
    <property type="match status" value="1"/>
</dbReference>
<dbReference type="InterPro" id="IPR001790">
    <property type="entry name" value="Ribosomal_uL10"/>
</dbReference>
<dbReference type="InterPro" id="IPR043141">
    <property type="entry name" value="Ribosomal_uL10-like_sf"/>
</dbReference>
<dbReference type="InterPro" id="IPR022973">
    <property type="entry name" value="Ribosomal_uL10_bac"/>
</dbReference>
<dbReference type="InterPro" id="IPR047865">
    <property type="entry name" value="Ribosomal_uL10_bac_type"/>
</dbReference>
<dbReference type="InterPro" id="IPR002363">
    <property type="entry name" value="Ribosomal_uL10_CS_bac"/>
</dbReference>
<dbReference type="NCBIfam" id="NF000955">
    <property type="entry name" value="PRK00099.1-1"/>
    <property type="match status" value="1"/>
</dbReference>
<dbReference type="PANTHER" id="PTHR11560">
    <property type="entry name" value="39S RIBOSOMAL PROTEIN L10, MITOCHONDRIAL"/>
    <property type="match status" value="1"/>
</dbReference>
<dbReference type="Pfam" id="PF00466">
    <property type="entry name" value="Ribosomal_L10"/>
    <property type="match status" value="1"/>
</dbReference>
<dbReference type="SUPFAM" id="SSF160369">
    <property type="entry name" value="Ribosomal protein L10-like"/>
    <property type="match status" value="1"/>
</dbReference>
<dbReference type="PROSITE" id="PS01109">
    <property type="entry name" value="RIBOSOMAL_L10"/>
    <property type="match status" value="1"/>
</dbReference>
<gene>
    <name evidence="1" type="primary">rplJ</name>
    <name type="ordered locus">NGO_1853</name>
</gene>
<keyword id="KW-1185">Reference proteome</keyword>
<keyword id="KW-0687">Ribonucleoprotein</keyword>
<keyword id="KW-0689">Ribosomal protein</keyword>
<keyword id="KW-0694">RNA-binding</keyword>
<keyword id="KW-0699">rRNA-binding</keyword>
<evidence type="ECO:0000255" key="1">
    <source>
        <dbReference type="HAMAP-Rule" id="MF_00362"/>
    </source>
</evidence>
<evidence type="ECO:0000305" key="2"/>
<comment type="function">
    <text evidence="1">Forms part of the ribosomal stalk, playing a central role in the interaction of the ribosome with GTP-bound translation factors.</text>
</comment>
<comment type="subunit">
    <text evidence="1">Part of the ribosomal stalk of the 50S ribosomal subunit. The N-terminus interacts with L11 and the large rRNA to form the base of the stalk. The C-terminus forms an elongated spine to which L12 dimers bind in a sequential fashion forming a multimeric L10(L12)X complex.</text>
</comment>
<comment type="similarity">
    <text evidence="1">Belongs to the universal ribosomal protein uL10 family.</text>
</comment>
<proteinExistence type="inferred from homology"/>
<name>RL10_NEIG1</name>
<protein>
    <recommendedName>
        <fullName evidence="1">Large ribosomal subunit protein uL10</fullName>
    </recommendedName>
    <alternativeName>
        <fullName evidence="2">50S ribosomal protein L10</fullName>
    </alternativeName>
</protein>
<sequence length="166" mass="17622">MSLNIETKKVAVEEISAAIANAQTLVVAEYRGISVSSMTELRANARKEGVYLRVLKNTLARRAVQGTSFVELADQMVGPLVYAASEDAVAAAKVLHQFAKKDDKIVVKAGSYNGEVMNAAQVAELASIPSREELLSKLLFVMQAPVSGFARGLAALAEKKAGEEAA</sequence>
<organism>
    <name type="scientific">Neisseria gonorrhoeae (strain ATCC 700825 / FA 1090)</name>
    <dbReference type="NCBI Taxonomy" id="242231"/>
    <lineage>
        <taxon>Bacteria</taxon>
        <taxon>Pseudomonadati</taxon>
        <taxon>Pseudomonadota</taxon>
        <taxon>Betaproteobacteria</taxon>
        <taxon>Neisseriales</taxon>
        <taxon>Neisseriaceae</taxon>
        <taxon>Neisseria</taxon>
    </lineage>
</organism>
<reference key="1">
    <citation type="submission" date="2003-03" db="EMBL/GenBank/DDBJ databases">
        <title>The complete genome sequence of Neisseria gonorrhoeae.</title>
        <authorList>
            <person name="Lewis L.A."/>
            <person name="Gillaspy A.F."/>
            <person name="McLaughlin R.E."/>
            <person name="Gipson M."/>
            <person name="Ducey T.F."/>
            <person name="Ownbey T."/>
            <person name="Hartman K."/>
            <person name="Nydick C."/>
            <person name="Carson M.B."/>
            <person name="Vaughn J."/>
            <person name="Thomson C."/>
            <person name="Song L."/>
            <person name="Lin S."/>
            <person name="Yuan X."/>
            <person name="Najar F."/>
            <person name="Zhan M."/>
            <person name="Ren Q."/>
            <person name="Zhu H."/>
            <person name="Qi S."/>
            <person name="Kenton S.M."/>
            <person name="Lai H."/>
            <person name="White J.D."/>
            <person name="Clifton S."/>
            <person name="Roe B.A."/>
            <person name="Dyer D.W."/>
        </authorList>
    </citation>
    <scope>NUCLEOTIDE SEQUENCE [LARGE SCALE GENOMIC DNA]</scope>
    <source>
        <strain>ATCC 700825 / FA 1090</strain>
    </source>
</reference>
<feature type="chain" id="PRO_0000234862" description="Large ribosomal subunit protein uL10">
    <location>
        <begin position="1"/>
        <end position="166"/>
    </location>
</feature>